<comment type="function">
    <text evidence="1">Overproduction of CaiE stimulates the activity of CaiB and CaiD.</text>
</comment>
<comment type="pathway">
    <text evidence="1">Amine and polyamine metabolism; carnitine metabolism.</text>
</comment>
<comment type="similarity">
    <text evidence="1">Belongs to the transferase hexapeptide repeat family.</text>
</comment>
<comment type="sequence caution" evidence="3">
    <conflict type="erroneous initiation">
        <sequence resource="EMBL-CDS" id="ABF02317"/>
    </conflict>
</comment>
<feature type="chain" id="PRO_0000292727" description="Carnitine operon protein CaiE">
    <location>
        <begin position="1"/>
        <end position="196"/>
    </location>
</feature>
<feature type="region of interest" description="Disordered" evidence="2">
    <location>
        <begin position="173"/>
        <end position="196"/>
    </location>
</feature>
<feature type="compositionally biased region" description="Polar residues" evidence="2">
    <location>
        <begin position="187"/>
        <end position="196"/>
    </location>
</feature>
<name>CAIE_SHIF8</name>
<proteinExistence type="inferred from homology"/>
<dbReference type="EMBL" id="CP000266">
    <property type="protein sequence ID" value="ABF02317.1"/>
    <property type="status" value="ALT_INIT"/>
    <property type="molecule type" value="Genomic_DNA"/>
</dbReference>
<dbReference type="RefSeq" id="WP_000122884.1">
    <property type="nucleotide sequence ID" value="NC_008258.1"/>
</dbReference>
<dbReference type="SMR" id="Q0T8F9"/>
<dbReference type="KEGG" id="sfv:SFV_0029"/>
<dbReference type="HOGENOM" id="CLU_064827_4_2_6"/>
<dbReference type="UniPathway" id="UPA00117"/>
<dbReference type="Proteomes" id="UP000000659">
    <property type="component" value="Chromosome"/>
</dbReference>
<dbReference type="GO" id="GO:0016740">
    <property type="term" value="F:transferase activity"/>
    <property type="evidence" value="ECO:0007669"/>
    <property type="project" value="UniProtKB-KW"/>
</dbReference>
<dbReference type="GO" id="GO:0009437">
    <property type="term" value="P:carnitine metabolic process"/>
    <property type="evidence" value="ECO:0007669"/>
    <property type="project" value="UniProtKB-UniRule"/>
</dbReference>
<dbReference type="CDD" id="cd04745">
    <property type="entry name" value="LbH_paaY_like"/>
    <property type="match status" value="1"/>
</dbReference>
<dbReference type="FunFam" id="2.160.10.10:FF:000012">
    <property type="entry name" value="Carnitine operon protein CaiE"/>
    <property type="match status" value="1"/>
</dbReference>
<dbReference type="Gene3D" id="2.160.10.10">
    <property type="entry name" value="Hexapeptide repeat proteins"/>
    <property type="match status" value="1"/>
</dbReference>
<dbReference type="HAMAP" id="MF_01525">
    <property type="entry name" value="CaiE"/>
    <property type="match status" value="1"/>
</dbReference>
<dbReference type="InterPro" id="IPR023446">
    <property type="entry name" value="CaiE"/>
</dbReference>
<dbReference type="InterPro" id="IPR001451">
    <property type="entry name" value="Hexapep"/>
</dbReference>
<dbReference type="InterPro" id="IPR050484">
    <property type="entry name" value="Transf_Hexapept/Carb_Anhydrase"/>
</dbReference>
<dbReference type="InterPro" id="IPR011004">
    <property type="entry name" value="Trimer_LpxA-like_sf"/>
</dbReference>
<dbReference type="NCBIfam" id="NF010150">
    <property type="entry name" value="PRK13627.1"/>
    <property type="match status" value="1"/>
</dbReference>
<dbReference type="PANTHER" id="PTHR13061">
    <property type="entry name" value="DYNACTIN SUBUNIT P25"/>
    <property type="match status" value="1"/>
</dbReference>
<dbReference type="PANTHER" id="PTHR13061:SF29">
    <property type="entry name" value="GAMMA CARBONIC ANHYDRASE-LIKE 1, MITOCHONDRIAL-RELATED"/>
    <property type="match status" value="1"/>
</dbReference>
<dbReference type="Pfam" id="PF00132">
    <property type="entry name" value="Hexapep"/>
    <property type="match status" value="1"/>
</dbReference>
<dbReference type="SUPFAM" id="SSF51161">
    <property type="entry name" value="Trimeric LpxA-like enzymes"/>
    <property type="match status" value="1"/>
</dbReference>
<reference key="1">
    <citation type="journal article" date="2006" name="BMC Genomics">
        <title>Complete genome sequence of Shigella flexneri 5b and comparison with Shigella flexneri 2a.</title>
        <authorList>
            <person name="Nie H."/>
            <person name="Yang F."/>
            <person name="Zhang X."/>
            <person name="Yang J."/>
            <person name="Chen L."/>
            <person name="Wang J."/>
            <person name="Xiong Z."/>
            <person name="Peng J."/>
            <person name="Sun L."/>
            <person name="Dong J."/>
            <person name="Xue Y."/>
            <person name="Xu X."/>
            <person name="Chen S."/>
            <person name="Yao Z."/>
            <person name="Shen Y."/>
            <person name="Jin Q."/>
        </authorList>
    </citation>
    <scope>NUCLEOTIDE SEQUENCE [LARGE SCALE GENOMIC DNA]</scope>
    <source>
        <strain>8401</strain>
    </source>
</reference>
<gene>
    <name evidence="1" type="primary">caiE</name>
    <name type="ordered locus">SFV_0029</name>
</gene>
<evidence type="ECO:0000255" key="1">
    <source>
        <dbReference type="HAMAP-Rule" id="MF_01525"/>
    </source>
</evidence>
<evidence type="ECO:0000256" key="2">
    <source>
        <dbReference type="SAM" id="MobiDB-lite"/>
    </source>
</evidence>
<evidence type="ECO:0000305" key="3"/>
<organism>
    <name type="scientific">Shigella flexneri serotype 5b (strain 8401)</name>
    <dbReference type="NCBI Taxonomy" id="373384"/>
    <lineage>
        <taxon>Bacteria</taxon>
        <taxon>Pseudomonadati</taxon>
        <taxon>Pseudomonadota</taxon>
        <taxon>Gammaproteobacteria</taxon>
        <taxon>Enterobacterales</taxon>
        <taxon>Enterobacteriaceae</taxon>
        <taxon>Shigella</taxon>
    </lineage>
</organism>
<sequence>MSYYAFEGLIPVVHPTAFVHPSAVLIGDVIVGAGVYIGPLASLRGDYGRLIVQAGANIQDGCIMHGYCDTDTIVGENGHIGHGAILHGCVIGRDALVGMNSVIMDGAVIGEESIVAAMSFVKAGFSGEKRQLLMGTPARAVRSVSDDELHWKRLNTKEYQDLVGRCHASLHETQPLRQMEENRPRLQGTTDVTPKR</sequence>
<accession>Q0T8F9</accession>
<keyword id="KW-0677">Repeat</keyword>
<keyword id="KW-0808">Transferase</keyword>
<protein>
    <recommendedName>
        <fullName evidence="1">Carnitine operon protein CaiE</fullName>
    </recommendedName>
</protein>